<protein>
    <recommendedName>
        <fullName evidence="1">DNA ligase</fullName>
        <ecNumber evidence="1">6.5.1.2</ecNumber>
    </recommendedName>
    <alternativeName>
        <fullName evidence="1">Polydeoxyribonucleotide synthase [NAD(+)]</fullName>
    </alternativeName>
</protein>
<accession>Q7MMT5</accession>
<gene>
    <name evidence="1" type="primary">ligA</name>
    <name type="ordered locus">VV0982</name>
</gene>
<organism>
    <name type="scientific">Vibrio vulnificus (strain YJ016)</name>
    <dbReference type="NCBI Taxonomy" id="196600"/>
    <lineage>
        <taxon>Bacteria</taxon>
        <taxon>Pseudomonadati</taxon>
        <taxon>Pseudomonadota</taxon>
        <taxon>Gammaproteobacteria</taxon>
        <taxon>Vibrionales</taxon>
        <taxon>Vibrionaceae</taxon>
        <taxon>Vibrio</taxon>
    </lineage>
</organism>
<dbReference type="EC" id="6.5.1.2" evidence="1"/>
<dbReference type="EMBL" id="BA000037">
    <property type="protein sequence ID" value="BAC93746.1"/>
    <property type="molecule type" value="Genomic_DNA"/>
</dbReference>
<dbReference type="RefSeq" id="WP_011149758.1">
    <property type="nucleotide sequence ID" value="NC_005139.1"/>
</dbReference>
<dbReference type="SMR" id="Q7MMT5"/>
<dbReference type="STRING" id="672.VV93_v1c09080"/>
<dbReference type="KEGG" id="vvy:VV0982"/>
<dbReference type="PATRIC" id="fig|196600.6.peg.980"/>
<dbReference type="eggNOG" id="COG0272">
    <property type="taxonomic scope" value="Bacteria"/>
</dbReference>
<dbReference type="HOGENOM" id="CLU_007764_2_1_6"/>
<dbReference type="Proteomes" id="UP000002675">
    <property type="component" value="Chromosome I"/>
</dbReference>
<dbReference type="GO" id="GO:0005829">
    <property type="term" value="C:cytosol"/>
    <property type="evidence" value="ECO:0007669"/>
    <property type="project" value="TreeGrafter"/>
</dbReference>
<dbReference type="GO" id="GO:0003677">
    <property type="term" value="F:DNA binding"/>
    <property type="evidence" value="ECO:0007669"/>
    <property type="project" value="InterPro"/>
</dbReference>
<dbReference type="GO" id="GO:0003911">
    <property type="term" value="F:DNA ligase (NAD+) activity"/>
    <property type="evidence" value="ECO:0007669"/>
    <property type="project" value="UniProtKB-UniRule"/>
</dbReference>
<dbReference type="GO" id="GO:0046872">
    <property type="term" value="F:metal ion binding"/>
    <property type="evidence" value="ECO:0007669"/>
    <property type="project" value="UniProtKB-KW"/>
</dbReference>
<dbReference type="GO" id="GO:0006281">
    <property type="term" value="P:DNA repair"/>
    <property type="evidence" value="ECO:0007669"/>
    <property type="project" value="UniProtKB-KW"/>
</dbReference>
<dbReference type="GO" id="GO:0006260">
    <property type="term" value="P:DNA replication"/>
    <property type="evidence" value="ECO:0007669"/>
    <property type="project" value="UniProtKB-KW"/>
</dbReference>
<dbReference type="CDD" id="cd17748">
    <property type="entry name" value="BRCT_DNA_ligase_like"/>
    <property type="match status" value="1"/>
</dbReference>
<dbReference type="CDD" id="cd00114">
    <property type="entry name" value="LIGANc"/>
    <property type="match status" value="1"/>
</dbReference>
<dbReference type="FunFam" id="1.10.150.20:FF:000006">
    <property type="entry name" value="DNA ligase"/>
    <property type="match status" value="1"/>
</dbReference>
<dbReference type="FunFam" id="1.10.150.20:FF:000007">
    <property type="entry name" value="DNA ligase"/>
    <property type="match status" value="1"/>
</dbReference>
<dbReference type="FunFam" id="1.10.287.610:FF:000002">
    <property type="entry name" value="DNA ligase"/>
    <property type="match status" value="1"/>
</dbReference>
<dbReference type="FunFam" id="2.40.50.140:FF:000012">
    <property type="entry name" value="DNA ligase"/>
    <property type="match status" value="1"/>
</dbReference>
<dbReference type="FunFam" id="3.30.470.30:FF:000001">
    <property type="entry name" value="DNA ligase"/>
    <property type="match status" value="1"/>
</dbReference>
<dbReference type="Gene3D" id="6.20.10.30">
    <property type="match status" value="1"/>
</dbReference>
<dbReference type="Gene3D" id="1.10.150.20">
    <property type="entry name" value="5' to 3' exonuclease, C-terminal subdomain"/>
    <property type="match status" value="2"/>
</dbReference>
<dbReference type="Gene3D" id="3.40.50.10190">
    <property type="entry name" value="BRCT domain"/>
    <property type="match status" value="1"/>
</dbReference>
<dbReference type="Gene3D" id="3.30.470.30">
    <property type="entry name" value="DNA ligase/mRNA capping enzyme"/>
    <property type="match status" value="1"/>
</dbReference>
<dbReference type="Gene3D" id="1.10.287.610">
    <property type="entry name" value="Helix hairpin bin"/>
    <property type="match status" value="1"/>
</dbReference>
<dbReference type="Gene3D" id="2.40.50.140">
    <property type="entry name" value="Nucleic acid-binding proteins"/>
    <property type="match status" value="1"/>
</dbReference>
<dbReference type="HAMAP" id="MF_01588">
    <property type="entry name" value="DNA_ligase_A"/>
    <property type="match status" value="1"/>
</dbReference>
<dbReference type="InterPro" id="IPR001357">
    <property type="entry name" value="BRCT_dom"/>
</dbReference>
<dbReference type="InterPro" id="IPR036420">
    <property type="entry name" value="BRCT_dom_sf"/>
</dbReference>
<dbReference type="InterPro" id="IPR041663">
    <property type="entry name" value="DisA/LigA_HHH"/>
</dbReference>
<dbReference type="InterPro" id="IPR001679">
    <property type="entry name" value="DNA_ligase"/>
</dbReference>
<dbReference type="InterPro" id="IPR018239">
    <property type="entry name" value="DNA_ligase_AS"/>
</dbReference>
<dbReference type="InterPro" id="IPR033136">
    <property type="entry name" value="DNA_ligase_CS"/>
</dbReference>
<dbReference type="InterPro" id="IPR013839">
    <property type="entry name" value="DNAligase_adenylation"/>
</dbReference>
<dbReference type="InterPro" id="IPR013840">
    <property type="entry name" value="DNAligase_N"/>
</dbReference>
<dbReference type="InterPro" id="IPR003583">
    <property type="entry name" value="Hlx-hairpin-Hlx_DNA-bd_motif"/>
</dbReference>
<dbReference type="InterPro" id="IPR012340">
    <property type="entry name" value="NA-bd_OB-fold"/>
</dbReference>
<dbReference type="InterPro" id="IPR004150">
    <property type="entry name" value="NAD_DNA_ligase_OB"/>
</dbReference>
<dbReference type="InterPro" id="IPR010994">
    <property type="entry name" value="RuvA_2-like"/>
</dbReference>
<dbReference type="InterPro" id="IPR004149">
    <property type="entry name" value="Znf_DNAligase_C4"/>
</dbReference>
<dbReference type="NCBIfam" id="TIGR00575">
    <property type="entry name" value="dnlj"/>
    <property type="match status" value="1"/>
</dbReference>
<dbReference type="NCBIfam" id="NF005932">
    <property type="entry name" value="PRK07956.1"/>
    <property type="match status" value="1"/>
</dbReference>
<dbReference type="PANTHER" id="PTHR23389">
    <property type="entry name" value="CHROMOSOME TRANSMISSION FIDELITY FACTOR 18"/>
    <property type="match status" value="1"/>
</dbReference>
<dbReference type="PANTHER" id="PTHR23389:SF9">
    <property type="entry name" value="DNA LIGASE"/>
    <property type="match status" value="1"/>
</dbReference>
<dbReference type="Pfam" id="PF00533">
    <property type="entry name" value="BRCT"/>
    <property type="match status" value="1"/>
</dbReference>
<dbReference type="Pfam" id="PF01653">
    <property type="entry name" value="DNA_ligase_aden"/>
    <property type="match status" value="1"/>
</dbReference>
<dbReference type="Pfam" id="PF03120">
    <property type="entry name" value="DNA_ligase_OB"/>
    <property type="match status" value="1"/>
</dbReference>
<dbReference type="Pfam" id="PF03119">
    <property type="entry name" value="DNA_ligase_ZBD"/>
    <property type="match status" value="1"/>
</dbReference>
<dbReference type="Pfam" id="PF12826">
    <property type="entry name" value="HHH_2"/>
    <property type="match status" value="1"/>
</dbReference>
<dbReference type="Pfam" id="PF14520">
    <property type="entry name" value="HHH_5"/>
    <property type="match status" value="1"/>
</dbReference>
<dbReference type="Pfam" id="PF22745">
    <property type="entry name" value="Nlig-Ia"/>
    <property type="match status" value="1"/>
</dbReference>
<dbReference type="PIRSF" id="PIRSF001604">
    <property type="entry name" value="LigA"/>
    <property type="match status" value="1"/>
</dbReference>
<dbReference type="SMART" id="SM00292">
    <property type="entry name" value="BRCT"/>
    <property type="match status" value="1"/>
</dbReference>
<dbReference type="SMART" id="SM00278">
    <property type="entry name" value="HhH1"/>
    <property type="match status" value="3"/>
</dbReference>
<dbReference type="SMART" id="SM00532">
    <property type="entry name" value="LIGANc"/>
    <property type="match status" value="1"/>
</dbReference>
<dbReference type="SUPFAM" id="SSF52113">
    <property type="entry name" value="BRCT domain"/>
    <property type="match status" value="1"/>
</dbReference>
<dbReference type="SUPFAM" id="SSF56091">
    <property type="entry name" value="DNA ligase/mRNA capping enzyme, catalytic domain"/>
    <property type="match status" value="1"/>
</dbReference>
<dbReference type="SUPFAM" id="SSF50249">
    <property type="entry name" value="Nucleic acid-binding proteins"/>
    <property type="match status" value="1"/>
</dbReference>
<dbReference type="SUPFAM" id="SSF47781">
    <property type="entry name" value="RuvA domain 2-like"/>
    <property type="match status" value="1"/>
</dbReference>
<dbReference type="PROSITE" id="PS50172">
    <property type="entry name" value="BRCT"/>
    <property type="match status" value="1"/>
</dbReference>
<dbReference type="PROSITE" id="PS01055">
    <property type="entry name" value="DNA_LIGASE_N1"/>
    <property type="match status" value="1"/>
</dbReference>
<dbReference type="PROSITE" id="PS01056">
    <property type="entry name" value="DNA_LIGASE_N2"/>
    <property type="match status" value="1"/>
</dbReference>
<sequence>MSESKQQYLEELKQQLHYHAVRYYVEDNPEIPDAEYDRMMRELMAIEAEHPEWISVDSPSQRVGGVALDSFRQVTHEIPMLSLDNAFSDEELESFLKRAQDRMPSAHIDAFCCEPKLDGLAVSLLYENGVLVQAATRGDGTTGENITENVRTIASVPLKLQGEGWPSRIEVRGEVFMPKVGFEKLNDIARKKGEKVFVNPRNAAAGSLRQLDSKITATRPLAFYAYSVGVVEGISLSSSHYQRFLQLKQWGLPMCPETKLVNGLESVKAFYADILNRRDALPYEIDGVVIKIDDIVIQEKLGFVARAPRWAIAYKFPAQEELTLLNDVEFQVGRTGAITPVAKLEPVFVGGVTVSNATLHNADEIERLGVMVGDTVVIRRAGDVIPQIVSVVKERRKGDENPIVFPTSCPVCHSHVERIEGEAVTRCSGGLVCQAQRKEALKHFVSRKALDVDGLGDKVIEQLVDKEMVETPADLFTLSAGVLTVLERMGPKSAQNIVNALNVAKETTLARFLYSLGIREVGEATAANLARHFKTLEAIQTATHEQLIEVPDIGEVVARHITAFFAEEKNQRVVQALIEQGIVWPPVEELGSEIPQPLAGKVVVLTGTLTQLSRGDAKAALERLGAKVTGSVSKKTDIVFAGEAAGSKLTKAQELGVEIQTEQDLLALL</sequence>
<evidence type="ECO:0000255" key="1">
    <source>
        <dbReference type="HAMAP-Rule" id="MF_01588"/>
    </source>
</evidence>
<proteinExistence type="inferred from homology"/>
<feature type="chain" id="PRO_0000313509" description="DNA ligase">
    <location>
        <begin position="1"/>
        <end position="669"/>
    </location>
</feature>
<feature type="domain" description="BRCT" evidence="1">
    <location>
        <begin position="593"/>
        <end position="669"/>
    </location>
</feature>
<feature type="active site" description="N6-AMP-lysine intermediate" evidence="1">
    <location>
        <position position="116"/>
    </location>
</feature>
<feature type="binding site" evidence="1">
    <location>
        <begin position="33"/>
        <end position="37"/>
    </location>
    <ligand>
        <name>NAD(+)</name>
        <dbReference type="ChEBI" id="CHEBI:57540"/>
    </ligand>
</feature>
<feature type="binding site" evidence="1">
    <location>
        <begin position="82"/>
        <end position="83"/>
    </location>
    <ligand>
        <name>NAD(+)</name>
        <dbReference type="ChEBI" id="CHEBI:57540"/>
    </ligand>
</feature>
<feature type="binding site" evidence="1">
    <location>
        <position position="114"/>
    </location>
    <ligand>
        <name>NAD(+)</name>
        <dbReference type="ChEBI" id="CHEBI:57540"/>
    </ligand>
</feature>
<feature type="binding site" evidence="1">
    <location>
        <position position="137"/>
    </location>
    <ligand>
        <name>NAD(+)</name>
        <dbReference type="ChEBI" id="CHEBI:57540"/>
    </ligand>
</feature>
<feature type="binding site" evidence="1">
    <location>
        <position position="174"/>
    </location>
    <ligand>
        <name>NAD(+)</name>
        <dbReference type="ChEBI" id="CHEBI:57540"/>
    </ligand>
</feature>
<feature type="binding site" evidence="1">
    <location>
        <position position="291"/>
    </location>
    <ligand>
        <name>NAD(+)</name>
        <dbReference type="ChEBI" id="CHEBI:57540"/>
    </ligand>
</feature>
<feature type="binding site" evidence="1">
    <location>
        <position position="315"/>
    </location>
    <ligand>
        <name>NAD(+)</name>
        <dbReference type="ChEBI" id="CHEBI:57540"/>
    </ligand>
</feature>
<feature type="binding site" evidence="1">
    <location>
        <position position="409"/>
    </location>
    <ligand>
        <name>Zn(2+)</name>
        <dbReference type="ChEBI" id="CHEBI:29105"/>
    </ligand>
</feature>
<feature type="binding site" evidence="1">
    <location>
        <position position="412"/>
    </location>
    <ligand>
        <name>Zn(2+)</name>
        <dbReference type="ChEBI" id="CHEBI:29105"/>
    </ligand>
</feature>
<feature type="binding site" evidence="1">
    <location>
        <position position="427"/>
    </location>
    <ligand>
        <name>Zn(2+)</name>
        <dbReference type="ChEBI" id="CHEBI:29105"/>
    </ligand>
</feature>
<feature type="binding site" evidence="1">
    <location>
        <position position="433"/>
    </location>
    <ligand>
        <name>Zn(2+)</name>
        <dbReference type="ChEBI" id="CHEBI:29105"/>
    </ligand>
</feature>
<reference key="1">
    <citation type="journal article" date="2003" name="Genome Res.">
        <title>Comparative genome analysis of Vibrio vulnificus, a marine pathogen.</title>
        <authorList>
            <person name="Chen C.-Y."/>
            <person name="Wu K.-M."/>
            <person name="Chang Y.-C."/>
            <person name="Chang C.-H."/>
            <person name="Tsai H.-C."/>
            <person name="Liao T.-L."/>
            <person name="Liu Y.-M."/>
            <person name="Chen H.-J."/>
            <person name="Shen A.B.-T."/>
            <person name="Li J.-C."/>
            <person name="Su T.-L."/>
            <person name="Shao C.-P."/>
            <person name="Lee C.-T."/>
            <person name="Hor L.-I."/>
            <person name="Tsai S.-F."/>
        </authorList>
    </citation>
    <scope>NUCLEOTIDE SEQUENCE [LARGE SCALE GENOMIC DNA]</scope>
    <source>
        <strain>YJ016</strain>
    </source>
</reference>
<keyword id="KW-0227">DNA damage</keyword>
<keyword id="KW-0234">DNA repair</keyword>
<keyword id="KW-0235">DNA replication</keyword>
<keyword id="KW-0436">Ligase</keyword>
<keyword id="KW-0460">Magnesium</keyword>
<keyword id="KW-0464">Manganese</keyword>
<keyword id="KW-0479">Metal-binding</keyword>
<keyword id="KW-0520">NAD</keyword>
<keyword id="KW-0862">Zinc</keyword>
<comment type="function">
    <text evidence="1">DNA ligase that catalyzes the formation of phosphodiester linkages between 5'-phosphoryl and 3'-hydroxyl groups in double-stranded DNA using NAD as a coenzyme and as the energy source for the reaction. It is essential for DNA replication and repair of damaged DNA.</text>
</comment>
<comment type="catalytic activity">
    <reaction evidence="1">
        <text>NAD(+) + (deoxyribonucleotide)n-3'-hydroxyl + 5'-phospho-(deoxyribonucleotide)m = (deoxyribonucleotide)n+m + AMP + beta-nicotinamide D-nucleotide.</text>
        <dbReference type="EC" id="6.5.1.2"/>
    </reaction>
</comment>
<comment type="cofactor">
    <cofactor evidence="1">
        <name>Mg(2+)</name>
        <dbReference type="ChEBI" id="CHEBI:18420"/>
    </cofactor>
    <cofactor evidence="1">
        <name>Mn(2+)</name>
        <dbReference type="ChEBI" id="CHEBI:29035"/>
    </cofactor>
</comment>
<comment type="similarity">
    <text evidence="1">Belongs to the NAD-dependent DNA ligase family. LigA subfamily.</text>
</comment>
<name>DNLJ_VIBVY</name>